<accession>A1UAY5</accession>
<name>MENG_MYCSK</name>
<comment type="function">
    <text evidence="1">Methyltransferase required for the conversion of demethylmenaquinol (DMKH2) to menaquinol (MKH2).</text>
</comment>
<comment type="catalytic activity">
    <reaction evidence="1">
        <text>a 2-demethylmenaquinol + S-adenosyl-L-methionine = a menaquinol + S-adenosyl-L-homocysteine + H(+)</text>
        <dbReference type="Rhea" id="RHEA:42640"/>
        <dbReference type="Rhea" id="RHEA-COMP:9539"/>
        <dbReference type="Rhea" id="RHEA-COMP:9563"/>
        <dbReference type="ChEBI" id="CHEBI:15378"/>
        <dbReference type="ChEBI" id="CHEBI:18151"/>
        <dbReference type="ChEBI" id="CHEBI:55437"/>
        <dbReference type="ChEBI" id="CHEBI:57856"/>
        <dbReference type="ChEBI" id="CHEBI:59789"/>
        <dbReference type="EC" id="2.1.1.163"/>
    </reaction>
</comment>
<comment type="pathway">
    <text evidence="1">Quinol/quinone metabolism; menaquinone biosynthesis; menaquinol from 1,4-dihydroxy-2-naphthoate: step 2/2.</text>
</comment>
<comment type="similarity">
    <text evidence="1">Belongs to the class I-like SAM-binding methyltransferase superfamily. MenG/UbiE family.</text>
</comment>
<reference key="1">
    <citation type="submission" date="2006-12" db="EMBL/GenBank/DDBJ databases">
        <title>Complete sequence of chromosome of Mycobacterium sp. KMS.</title>
        <authorList>
            <consortium name="US DOE Joint Genome Institute"/>
            <person name="Copeland A."/>
            <person name="Lucas S."/>
            <person name="Lapidus A."/>
            <person name="Barry K."/>
            <person name="Detter J.C."/>
            <person name="Glavina del Rio T."/>
            <person name="Hammon N."/>
            <person name="Israni S."/>
            <person name="Dalin E."/>
            <person name="Tice H."/>
            <person name="Pitluck S."/>
            <person name="Kiss H."/>
            <person name="Brettin T."/>
            <person name="Bruce D."/>
            <person name="Han C."/>
            <person name="Tapia R."/>
            <person name="Gilna P."/>
            <person name="Schmutz J."/>
            <person name="Larimer F."/>
            <person name="Land M."/>
            <person name="Hauser L."/>
            <person name="Kyrpides N."/>
            <person name="Mikhailova N."/>
            <person name="Miller C.D."/>
            <person name="Richardson P."/>
        </authorList>
    </citation>
    <scope>NUCLEOTIDE SEQUENCE [LARGE SCALE GENOMIC DNA]</scope>
    <source>
        <strain>KMS</strain>
    </source>
</reference>
<feature type="chain" id="PRO_1000056260" description="Demethylmenaquinone methyltransferase">
    <location>
        <begin position="1"/>
        <end position="230"/>
    </location>
</feature>
<feature type="binding site" evidence="1">
    <location>
        <position position="62"/>
    </location>
    <ligand>
        <name>S-adenosyl-L-methionine</name>
        <dbReference type="ChEBI" id="CHEBI:59789"/>
    </ligand>
</feature>
<feature type="binding site" evidence="1">
    <location>
        <position position="80"/>
    </location>
    <ligand>
        <name>S-adenosyl-L-methionine</name>
        <dbReference type="ChEBI" id="CHEBI:59789"/>
    </ligand>
</feature>
<feature type="binding site" evidence="1">
    <location>
        <begin position="100"/>
        <end position="101"/>
    </location>
    <ligand>
        <name>S-adenosyl-L-methionine</name>
        <dbReference type="ChEBI" id="CHEBI:59789"/>
    </ligand>
</feature>
<feature type="binding site" evidence="1">
    <location>
        <position position="117"/>
    </location>
    <ligand>
        <name>S-adenosyl-L-methionine</name>
        <dbReference type="ChEBI" id="CHEBI:59789"/>
    </ligand>
</feature>
<dbReference type="EC" id="2.1.1.163" evidence="1"/>
<dbReference type="EMBL" id="CP000518">
    <property type="protein sequence ID" value="ABL89993.1"/>
    <property type="molecule type" value="Genomic_DNA"/>
</dbReference>
<dbReference type="SMR" id="A1UAY5"/>
<dbReference type="STRING" id="189918.Mkms_0777"/>
<dbReference type="KEGG" id="mkm:Mkms_0777"/>
<dbReference type="HOGENOM" id="CLU_037990_0_0_11"/>
<dbReference type="OrthoDB" id="9808140at2"/>
<dbReference type="UniPathway" id="UPA00079">
    <property type="reaction ID" value="UER00169"/>
</dbReference>
<dbReference type="GO" id="GO:0043770">
    <property type="term" value="F:demethylmenaquinone methyltransferase activity"/>
    <property type="evidence" value="ECO:0007669"/>
    <property type="project" value="UniProtKB-UniRule"/>
</dbReference>
<dbReference type="GO" id="GO:0009234">
    <property type="term" value="P:menaquinone biosynthetic process"/>
    <property type="evidence" value="ECO:0007669"/>
    <property type="project" value="UniProtKB-UniRule"/>
</dbReference>
<dbReference type="GO" id="GO:0032259">
    <property type="term" value="P:methylation"/>
    <property type="evidence" value="ECO:0007669"/>
    <property type="project" value="UniProtKB-KW"/>
</dbReference>
<dbReference type="CDD" id="cd02440">
    <property type="entry name" value="AdoMet_MTases"/>
    <property type="match status" value="1"/>
</dbReference>
<dbReference type="Gene3D" id="3.40.50.150">
    <property type="entry name" value="Vaccinia Virus protein VP39"/>
    <property type="match status" value="1"/>
</dbReference>
<dbReference type="HAMAP" id="MF_01813">
    <property type="entry name" value="MenG_UbiE_methyltr"/>
    <property type="match status" value="1"/>
</dbReference>
<dbReference type="InterPro" id="IPR029063">
    <property type="entry name" value="SAM-dependent_MTases_sf"/>
</dbReference>
<dbReference type="InterPro" id="IPR004033">
    <property type="entry name" value="UbiE/COQ5_MeTrFase"/>
</dbReference>
<dbReference type="InterPro" id="IPR023576">
    <property type="entry name" value="UbiE/COQ5_MeTrFase_CS"/>
</dbReference>
<dbReference type="NCBIfam" id="TIGR01934">
    <property type="entry name" value="MenG_MenH_UbiE"/>
    <property type="match status" value="1"/>
</dbReference>
<dbReference type="NCBIfam" id="NF001241">
    <property type="entry name" value="PRK00216.1-2"/>
    <property type="match status" value="1"/>
</dbReference>
<dbReference type="PANTHER" id="PTHR43591:SF24">
    <property type="entry name" value="2-METHOXY-6-POLYPRENYL-1,4-BENZOQUINOL METHYLASE, MITOCHONDRIAL"/>
    <property type="match status" value="1"/>
</dbReference>
<dbReference type="PANTHER" id="PTHR43591">
    <property type="entry name" value="METHYLTRANSFERASE"/>
    <property type="match status" value="1"/>
</dbReference>
<dbReference type="Pfam" id="PF01209">
    <property type="entry name" value="Ubie_methyltran"/>
    <property type="match status" value="1"/>
</dbReference>
<dbReference type="SUPFAM" id="SSF53335">
    <property type="entry name" value="S-adenosyl-L-methionine-dependent methyltransferases"/>
    <property type="match status" value="1"/>
</dbReference>
<dbReference type="PROSITE" id="PS51608">
    <property type="entry name" value="SAM_MT_UBIE"/>
    <property type="match status" value="1"/>
</dbReference>
<dbReference type="PROSITE" id="PS01183">
    <property type="entry name" value="UBIE_1"/>
    <property type="match status" value="1"/>
</dbReference>
<dbReference type="PROSITE" id="PS01184">
    <property type="entry name" value="UBIE_2"/>
    <property type="match status" value="1"/>
</dbReference>
<sequence>MSRATLDKNPHEVASMFDAVARRYDLTNTVLSLGQDRFWRRETCAALGIGPGDRVLDLAAGTAVSTVELAASGAWCVAADFSVGMLSAGRQRDVPKVAGDATRLPFADESFDAVTISFGLRNVVDHVAGLEEMARVTRPGGRLVVCEFSTPTNRAFATLYKEYLMKALPRMARAVASNPDAYVYLAESIRAWPDQAGLARRIEAAGWSQVRWRNLTGGIVALHAAVKPPR</sequence>
<protein>
    <recommendedName>
        <fullName evidence="1">Demethylmenaquinone methyltransferase</fullName>
        <ecNumber evidence="1">2.1.1.163</ecNumber>
    </recommendedName>
</protein>
<gene>
    <name evidence="1" type="primary">menG</name>
    <name type="ordered locus">Mkms_0777</name>
</gene>
<organism>
    <name type="scientific">Mycobacterium sp. (strain KMS)</name>
    <dbReference type="NCBI Taxonomy" id="189918"/>
    <lineage>
        <taxon>Bacteria</taxon>
        <taxon>Bacillati</taxon>
        <taxon>Actinomycetota</taxon>
        <taxon>Actinomycetes</taxon>
        <taxon>Mycobacteriales</taxon>
        <taxon>Mycobacteriaceae</taxon>
        <taxon>Mycobacterium</taxon>
    </lineage>
</organism>
<keyword id="KW-0474">Menaquinone biosynthesis</keyword>
<keyword id="KW-0489">Methyltransferase</keyword>
<keyword id="KW-0949">S-adenosyl-L-methionine</keyword>
<keyword id="KW-0808">Transferase</keyword>
<proteinExistence type="inferred from homology"/>
<evidence type="ECO:0000255" key="1">
    <source>
        <dbReference type="HAMAP-Rule" id="MF_01813"/>
    </source>
</evidence>